<keyword id="KW-1185">Reference proteome</keyword>
<keyword id="KW-0804">Transcription</keyword>
<keyword id="KW-0805">Transcription regulation</keyword>
<proteinExistence type="inferred from homology"/>
<gene>
    <name type="primary">hycA</name>
    <name type="ordered locus">Z4033</name>
    <name type="ordered locus">ECs3581</name>
</gene>
<name>HYCA_ECO57</name>
<comment type="function">
    <text evidence="1">Regulatory protein for the formate hydrogenlyase system. Could act by directly interacting with FhlA or by preventing the binding of FhlA to the upstream activatory sequence (By similarity).</text>
</comment>
<organism>
    <name type="scientific">Escherichia coli O157:H7</name>
    <dbReference type="NCBI Taxonomy" id="83334"/>
    <lineage>
        <taxon>Bacteria</taxon>
        <taxon>Pseudomonadati</taxon>
        <taxon>Pseudomonadota</taxon>
        <taxon>Gammaproteobacteria</taxon>
        <taxon>Enterobacterales</taxon>
        <taxon>Enterobacteriaceae</taxon>
        <taxon>Escherichia</taxon>
    </lineage>
</organism>
<protein>
    <recommendedName>
        <fullName>Formate hydrogenlyase regulatory protein HycA</fullName>
    </recommendedName>
</protein>
<evidence type="ECO:0000250" key="1"/>
<sequence>MTIWEISEKADYIAQRHRRLQDQWHIYCNSLVQGITLSKARLHHAMSCAPDKELCFVLFEHFRIYVTLADGFNSHTIEYYVETKDGEDKQRIAQAQLSIDGMIDGKVNIRDREQVLEHYLEKIAGVYDSLYTAIENNVPVNLSQLVKGQSPAA</sequence>
<dbReference type="EMBL" id="AE005174">
    <property type="protein sequence ID" value="AAG57832.1"/>
    <property type="molecule type" value="Genomic_DNA"/>
</dbReference>
<dbReference type="EMBL" id="BA000007">
    <property type="protein sequence ID" value="BAB37004.1"/>
    <property type="molecule type" value="Genomic_DNA"/>
</dbReference>
<dbReference type="PIR" id="D85921">
    <property type="entry name" value="D85921"/>
</dbReference>
<dbReference type="PIR" id="E91076">
    <property type="entry name" value="E91076"/>
</dbReference>
<dbReference type="RefSeq" id="NP_311608.1">
    <property type="nucleotide sequence ID" value="NC_002695.1"/>
</dbReference>
<dbReference type="RefSeq" id="WP_000158056.1">
    <property type="nucleotide sequence ID" value="NZ_VOAI01000003.1"/>
</dbReference>
<dbReference type="STRING" id="155864.Z4033"/>
<dbReference type="GeneID" id="914697"/>
<dbReference type="GeneID" id="93779283"/>
<dbReference type="KEGG" id="ece:Z4033"/>
<dbReference type="KEGG" id="ecs:ECs_3581"/>
<dbReference type="PATRIC" id="fig|386585.9.peg.3742"/>
<dbReference type="eggNOG" id="ENOG50305VH">
    <property type="taxonomic scope" value="Bacteria"/>
</dbReference>
<dbReference type="HOGENOM" id="CLU_115336_0_0_6"/>
<dbReference type="OMA" id="MTIWELS"/>
<dbReference type="Proteomes" id="UP000000558">
    <property type="component" value="Chromosome"/>
</dbReference>
<dbReference type="Proteomes" id="UP000002519">
    <property type="component" value="Chromosome"/>
</dbReference>
<dbReference type="InterPro" id="IPR021285">
    <property type="entry name" value="Tscrpt_reg_HycA"/>
</dbReference>
<dbReference type="NCBIfam" id="NF007567">
    <property type="entry name" value="PRK10198.1"/>
    <property type="match status" value="1"/>
</dbReference>
<dbReference type="Pfam" id="PF11046">
    <property type="entry name" value="HycA_repressor"/>
    <property type="match status" value="1"/>
</dbReference>
<feature type="chain" id="PRO_0000084101" description="Formate hydrogenlyase regulatory protein HycA">
    <location>
        <begin position="1"/>
        <end position="153"/>
    </location>
</feature>
<accession>P0AEV5</accession>
<accession>P16427</accession>
<reference key="1">
    <citation type="journal article" date="2001" name="Nature">
        <title>Genome sequence of enterohaemorrhagic Escherichia coli O157:H7.</title>
        <authorList>
            <person name="Perna N.T."/>
            <person name="Plunkett G. III"/>
            <person name="Burland V."/>
            <person name="Mau B."/>
            <person name="Glasner J.D."/>
            <person name="Rose D.J."/>
            <person name="Mayhew G.F."/>
            <person name="Evans P.S."/>
            <person name="Gregor J."/>
            <person name="Kirkpatrick H.A."/>
            <person name="Posfai G."/>
            <person name="Hackett J."/>
            <person name="Klink S."/>
            <person name="Boutin A."/>
            <person name="Shao Y."/>
            <person name="Miller L."/>
            <person name="Grotbeck E.J."/>
            <person name="Davis N.W."/>
            <person name="Lim A."/>
            <person name="Dimalanta E.T."/>
            <person name="Potamousis K."/>
            <person name="Apodaca J."/>
            <person name="Anantharaman T.S."/>
            <person name="Lin J."/>
            <person name="Yen G."/>
            <person name="Schwartz D.C."/>
            <person name="Welch R.A."/>
            <person name="Blattner F.R."/>
        </authorList>
    </citation>
    <scope>NUCLEOTIDE SEQUENCE [LARGE SCALE GENOMIC DNA]</scope>
    <source>
        <strain>O157:H7 / EDL933 / ATCC 700927 / EHEC</strain>
    </source>
</reference>
<reference key="2">
    <citation type="journal article" date="2001" name="DNA Res.">
        <title>Complete genome sequence of enterohemorrhagic Escherichia coli O157:H7 and genomic comparison with a laboratory strain K-12.</title>
        <authorList>
            <person name="Hayashi T."/>
            <person name="Makino K."/>
            <person name="Ohnishi M."/>
            <person name="Kurokawa K."/>
            <person name="Ishii K."/>
            <person name="Yokoyama K."/>
            <person name="Han C.-G."/>
            <person name="Ohtsubo E."/>
            <person name="Nakayama K."/>
            <person name="Murata T."/>
            <person name="Tanaka M."/>
            <person name="Tobe T."/>
            <person name="Iida T."/>
            <person name="Takami H."/>
            <person name="Honda T."/>
            <person name="Sasakawa C."/>
            <person name="Ogasawara N."/>
            <person name="Yasunaga T."/>
            <person name="Kuhara S."/>
            <person name="Shiba T."/>
            <person name="Hattori M."/>
            <person name="Shinagawa H."/>
        </authorList>
    </citation>
    <scope>NUCLEOTIDE SEQUENCE [LARGE SCALE GENOMIC DNA]</scope>
    <source>
        <strain>O157:H7 / Sakai / RIMD 0509952 / EHEC</strain>
    </source>
</reference>